<protein>
    <recommendedName>
        <fullName evidence="1">Small ribosomal subunit protein uS2</fullName>
    </recommendedName>
    <alternativeName>
        <fullName evidence="3">40S ribosomal protein S0</fullName>
    </alternativeName>
</protein>
<evidence type="ECO:0000255" key="1">
    <source>
        <dbReference type="HAMAP-Rule" id="MF_03015"/>
    </source>
</evidence>
<evidence type="ECO:0000256" key="2">
    <source>
        <dbReference type="SAM" id="MobiDB-lite"/>
    </source>
</evidence>
<evidence type="ECO:0000305" key="3"/>
<keyword id="KW-0007">Acetylation</keyword>
<keyword id="KW-0963">Cytoplasm</keyword>
<keyword id="KW-1185">Reference proteome</keyword>
<keyword id="KW-0687">Ribonucleoprotein</keyword>
<keyword id="KW-0689">Ribosomal protein</keyword>
<comment type="function">
    <text evidence="1">Required for the assembly and/or stability of the 40S ribosomal subunit. Required for the processing of the 20S rRNA-precursor to mature 18S rRNA in a late step of the maturation of 40S ribosomal subunits.</text>
</comment>
<comment type="subunit">
    <text evidence="1">Component of the small ribosomal subunit. Mature ribosomes consist of a small (40S) and a large (60S) subunit. The 40S subunit contains about 33 different proteins and 1 molecule of RNA (18S). The 60S subunit contains about 49 different proteins and 3 molecules of RNA (25S, 5.8S and 5S). Interacts with RPS21.</text>
</comment>
<comment type="subcellular location">
    <subcellularLocation>
        <location evidence="1">Cytoplasm</location>
    </subcellularLocation>
</comment>
<comment type="similarity">
    <text evidence="1">Belongs to the universal ribosomal protein uS2 family.</text>
</comment>
<organism>
    <name type="scientific">Meyerozyma guilliermondii (strain ATCC 6260 / CBS 566 / DSM 6381 / JCM 1539 / NBRC 10279 / NRRL Y-324)</name>
    <name type="common">Yeast</name>
    <name type="synonym">Candida guilliermondii</name>
    <dbReference type="NCBI Taxonomy" id="294746"/>
    <lineage>
        <taxon>Eukaryota</taxon>
        <taxon>Fungi</taxon>
        <taxon>Dikarya</taxon>
        <taxon>Ascomycota</taxon>
        <taxon>Saccharomycotina</taxon>
        <taxon>Pichiomycetes</taxon>
        <taxon>Debaryomycetaceae</taxon>
        <taxon>Meyerozyma</taxon>
    </lineage>
</organism>
<gene>
    <name evidence="1" type="primary">RPS0</name>
    <name type="ORF">PGUG_02370</name>
</gene>
<dbReference type="EMBL" id="CH408157">
    <property type="protein sequence ID" value="EDK38272.1"/>
    <property type="molecule type" value="Genomic_DNA"/>
</dbReference>
<dbReference type="RefSeq" id="XP_001484641.1">
    <property type="nucleotide sequence ID" value="XM_001484591.1"/>
</dbReference>
<dbReference type="SMR" id="A5DGG9"/>
<dbReference type="FunCoup" id="A5DGG9">
    <property type="interactions" value="1318"/>
</dbReference>
<dbReference type="STRING" id="294746.A5DGG9"/>
<dbReference type="GeneID" id="5126464"/>
<dbReference type="KEGG" id="pgu:PGUG_02370"/>
<dbReference type="VEuPathDB" id="FungiDB:PGUG_02370"/>
<dbReference type="eggNOG" id="KOG0830">
    <property type="taxonomic scope" value="Eukaryota"/>
</dbReference>
<dbReference type="HOGENOM" id="CLU_058171_0_1_1"/>
<dbReference type="InParanoid" id="A5DGG9"/>
<dbReference type="OMA" id="VKNFFEP"/>
<dbReference type="OrthoDB" id="414863at2759"/>
<dbReference type="Proteomes" id="UP000001997">
    <property type="component" value="Unassembled WGS sequence"/>
</dbReference>
<dbReference type="GO" id="GO:0022627">
    <property type="term" value="C:cytosolic small ribosomal subunit"/>
    <property type="evidence" value="ECO:0007669"/>
    <property type="project" value="UniProtKB-UniRule"/>
</dbReference>
<dbReference type="GO" id="GO:0003735">
    <property type="term" value="F:structural constituent of ribosome"/>
    <property type="evidence" value="ECO:0007669"/>
    <property type="project" value="UniProtKB-UniRule"/>
</dbReference>
<dbReference type="GO" id="GO:0000028">
    <property type="term" value="P:ribosomal small subunit assembly"/>
    <property type="evidence" value="ECO:0007669"/>
    <property type="project" value="UniProtKB-UniRule"/>
</dbReference>
<dbReference type="GO" id="GO:0006412">
    <property type="term" value="P:translation"/>
    <property type="evidence" value="ECO:0007669"/>
    <property type="project" value="UniProtKB-UniRule"/>
</dbReference>
<dbReference type="CDD" id="cd01425">
    <property type="entry name" value="RPS2"/>
    <property type="match status" value="1"/>
</dbReference>
<dbReference type="FunFam" id="3.40.50.10490:FF:000010">
    <property type="entry name" value="40S ribosomal protein S0"/>
    <property type="match status" value="1"/>
</dbReference>
<dbReference type="Gene3D" id="3.40.50.10490">
    <property type="entry name" value="Glucose-6-phosphate isomerase like protein, domain 1"/>
    <property type="match status" value="1"/>
</dbReference>
<dbReference type="HAMAP" id="MF_03015">
    <property type="entry name" value="Ribosomal_S2_euk"/>
    <property type="match status" value="1"/>
</dbReference>
<dbReference type="InterPro" id="IPR001865">
    <property type="entry name" value="Ribosomal_uS2"/>
</dbReference>
<dbReference type="InterPro" id="IPR018130">
    <property type="entry name" value="Ribosomal_uS2_CS"/>
</dbReference>
<dbReference type="InterPro" id="IPR027498">
    <property type="entry name" value="Ribosomal_uS2_euk"/>
</dbReference>
<dbReference type="InterPro" id="IPR005707">
    <property type="entry name" value="Ribosomal_uS2_euk/arc"/>
</dbReference>
<dbReference type="InterPro" id="IPR023591">
    <property type="entry name" value="Ribosomal_uS2_flav_dom_sf"/>
</dbReference>
<dbReference type="NCBIfam" id="TIGR01012">
    <property type="entry name" value="uS2_euk_arch"/>
    <property type="match status" value="1"/>
</dbReference>
<dbReference type="PANTHER" id="PTHR11489">
    <property type="entry name" value="40S RIBOSOMAL PROTEIN SA"/>
    <property type="match status" value="1"/>
</dbReference>
<dbReference type="Pfam" id="PF00318">
    <property type="entry name" value="Ribosomal_S2"/>
    <property type="match status" value="2"/>
</dbReference>
<dbReference type="PRINTS" id="PR00395">
    <property type="entry name" value="RIBOSOMALS2"/>
</dbReference>
<dbReference type="SUPFAM" id="SSF52313">
    <property type="entry name" value="Ribosomal protein S2"/>
    <property type="match status" value="1"/>
</dbReference>
<dbReference type="PROSITE" id="PS00962">
    <property type="entry name" value="RIBOSOMAL_S2_1"/>
    <property type="match status" value="1"/>
</dbReference>
<dbReference type="PROSITE" id="PS00963">
    <property type="entry name" value="RIBOSOMAL_S2_2"/>
    <property type="match status" value="1"/>
</dbReference>
<reference key="1">
    <citation type="journal article" date="2009" name="Nature">
        <title>Evolution of pathogenicity and sexual reproduction in eight Candida genomes.</title>
        <authorList>
            <person name="Butler G."/>
            <person name="Rasmussen M.D."/>
            <person name="Lin M.F."/>
            <person name="Santos M.A.S."/>
            <person name="Sakthikumar S."/>
            <person name="Munro C.A."/>
            <person name="Rheinbay E."/>
            <person name="Grabherr M."/>
            <person name="Forche A."/>
            <person name="Reedy J.L."/>
            <person name="Agrafioti I."/>
            <person name="Arnaud M.B."/>
            <person name="Bates S."/>
            <person name="Brown A.J.P."/>
            <person name="Brunke S."/>
            <person name="Costanzo M.C."/>
            <person name="Fitzpatrick D.A."/>
            <person name="de Groot P.W.J."/>
            <person name="Harris D."/>
            <person name="Hoyer L.L."/>
            <person name="Hube B."/>
            <person name="Klis F.M."/>
            <person name="Kodira C."/>
            <person name="Lennard N."/>
            <person name="Logue M.E."/>
            <person name="Martin R."/>
            <person name="Neiman A.M."/>
            <person name="Nikolaou E."/>
            <person name="Quail M.A."/>
            <person name="Quinn J."/>
            <person name="Santos M.C."/>
            <person name="Schmitzberger F.F."/>
            <person name="Sherlock G."/>
            <person name="Shah P."/>
            <person name="Silverstein K.A.T."/>
            <person name="Skrzypek M.S."/>
            <person name="Soll D."/>
            <person name="Staggs R."/>
            <person name="Stansfield I."/>
            <person name="Stumpf M.P.H."/>
            <person name="Sudbery P.E."/>
            <person name="Srikantha T."/>
            <person name="Zeng Q."/>
            <person name="Berman J."/>
            <person name="Berriman M."/>
            <person name="Heitman J."/>
            <person name="Gow N.A.R."/>
            <person name="Lorenz M.C."/>
            <person name="Birren B.W."/>
            <person name="Kellis M."/>
            <person name="Cuomo C.A."/>
        </authorList>
    </citation>
    <scope>NUCLEOTIDE SEQUENCE [LARGE SCALE GENOMIC DNA]</scope>
    <source>
        <strain>ATCC 6260 / CBS 566 / DSM 6381 / JCM 1539 / NBRC 10279 / NRRL Y-324</strain>
    </source>
</reference>
<accession>A5DGG9</accession>
<sequence>MSLPASFDLTAEDAKLLLAANVHLGSKNVIVHNKPYVYKTRPDGVNVINIGKTWEKIVLAARTIAAIPNAADVAVCSSRTFGQRAVLKFAAHTGATPIAGRFTPGNFTNYITRSFKEPRLVIVTDPRTDAQAIKESSYVNIPVIALTDMDSPTDYVDIAIPCNNKGKHSIGLIWWLLAREVLRLRGIIPDRSTEWSVMPDLYFYRDPEEIEQNAAEDSKAEDAEEAPVADAEPDWSGETEDVDWAESGATPAAEEAAASNW</sequence>
<feature type="initiator methionine" description="Removed" evidence="1">
    <location>
        <position position="1"/>
    </location>
</feature>
<feature type="chain" id="PRO_0000371641" description="Small ribosomal subunit protein uS2">
    <location>
        <begin position="2"/>
        <end position="261"/>
    </location>
</feature>
<feature type="region of interest" description="Disordered" evidence="2">
    <location>
        <begin position="211"/>
        <end position="261"/>
    </location>
</feature>
<feature type="compositionally biased region" description="Acidic residues" evidence="2">
    <location>
        <begin position="222"/>
        <end position="244"/>
    </location>
</feature>
<feature type="compositionally biased region" description="Low complexity" evidence="2">
    <location>
        <begin position="245"/>
        <end position="261"/>
    </location>
</feature>
<feature type="modified residue" description="N-acetylserine" evidence="1">
    <location>
        <position position="2"/>
    </location>
</feature>
<name>RSSA_PICGU</name>
<proteinExistence type="inferred from homology"/>